<reference key="1">
    <citation type="journal article" date="1996" name="Science">
        <title>Complete genome sequence of the methanogenic archaeon, Methanococcus jannaschii.</title>
        <authorList>
            <person name="Bult C.J."/>
            <person name="White O."/>
            <person name="Olsen G.J."/>
            <person name="Zhou L."/>
            <person name="Fleischmann R.D."/>
            <person name="Sutton G.G."/>
            <person name="Blake J.A."/>
            <person name="FitzGerald L.M."/>
            <person name="Clayton R.A."/>
            <person name="Gocayne J.D."/>
            <person name="Kerlavage A.R."/>
            <person name="Dougherty B.A."/>
            <person name="Tomb J.-F."/>
            <person name="Adams M.D."/>
            <person name="Reich C.I."/>
            <person name="Overbeek R."/>
            <person name="Kirkness E.F."/>
            <person name="Weinstock K.G."/>
            <person name="Merrick J.M."/>
            <person name="Glodek A."/>
            <person name="Scott J.L."/>
            <person name="Geoghagen N.S.M."/>
            <person name="Weidman J.F."/>
            <person name="Fuhrmann J.L."/>
            <person name="Nguyen D."/>
            <person name="Utterback T.R."/>
            <person name="Kelley J.M."/>
            <person name="Peterson J.D."/>
            <person name="Sadow P.W."/>
            <person name="Hanna M.C."/>
            <person name="Cotton M.D."/>
            <person name="Roberts K.M."/>
            <person name="Hurst M.A."/>
            <person name="Kaine B.P."/>
            <person name="Borodovsky M."/>
            <person name="Klenk H.-P."/>
            <person name="Fraser C.M."/>
            <person name="Smith H.O."/>
            <person name="Woese C.R."/>
            <person name="Venter J.C."/>
        </authorList>
    </citation>
    <scope>NUCLEOTIDE SEQUENCE [LARGE SCALE GENOMIC DNA]</scope>
    <source>
        <strain>ATCC 43067 / DSM 2661 / JAL-1 / JCM 10045 / NBRC 100440</strain>
    </source>
</reference>
<reference key="2">
    <citation type="journal article" date="2000" name="J. Bacteriol.">
        <title>Biochemical and physical properties of the Methanococcus jannaschii 20S proteasome and PAN, a homolog of the ATPase (Rpt) subunits of the eucaryal 26S proteasome.</title>
        <authorList>
            <person name="Wilson H.L."/>
            <person name="Ou M.S."/>
            <person name="Aldrich H.C."/>
            <person name="Maupin-Furlow J."/>
        </authorList>
    </citation>
    <scope>FUNCTION</scope>
    <scope>CATALYTIC ACTIVITY</scope>
    <scope>SUBUNIT</scope>
    <scope>INTERACTION WITH PAN</scope>
</reference>
<reference key="3">
    <citation type="journal article" date="2009" name="Mol. Cell">
        <title>Structural insights into the regulatory particle of the proteasome from Methanocaldococcus jannaschii.</title>
        <authorList>
            <person name="Zhang F."/>
            <person name="Hu M."/>
            <person name="Tian G."/>
            <person name="Zhang P."/>
            <person name="Finley D."/>
            <person name="Jeffrey P.D."/>
            <person name="Shi Y."/>
        </authorList>
    </citation>
    <scope>X-RAY CRYSTALLOGRAPHY (4.1 ANGSTROMS) IN COMPLEX WITH ALPHA SUBUNIT</scope>
    <scope>GATED STRUCTURE</scope>
    <scope>SUBUNIT</scope>
</reference>
<proteinExistence type="evidence at protein level"/>
<keyword id="KW-0002">3D-structure</keyword>
<keyword id="KW-0068">Autocatalytic cleavage</keyword>
<keyword id="KW-0963">Cytoplasm</keyword>
<keyword id="KW-0378">Hydrolase</keyword>
<keyword id="KW-0645">Protease</keyword>
<keyword id="KW-0647">Proteasome</keyword>
<keyword id="KW-1185">Reference proteome</keyword>
<keyword id="KW-0888">Threonine protease</keyword>
<keyword id="KW-0865">Zymogen</keyword>
<organism>
    <name type="scientific">Methanocaldococcus jannaschii (strain ATCC 43067 / DSM 2661 / JAL-1 / JCM 10045 / NBRC 100440)</name>
    <name type="common">Methanococcus jannaschii</name>
    <dbReference type="NCBI Taxonomy" id="243232"/>
    <lineage>
        <taxon>Archaea</taxon>
        <taxon>Methanobacteriati</taxon>
        <taxon>Methanobacteriota</taxon>
        <taxon>Methanomada group</taxon>
        <taxon>Methanococci</taxon>
        <taxon>Methanococcales</taxon>
        <taxon>Methanocaldococcaceae</taxon>
        <taxon>Methanocaldococcus</taxon>
    </lineage>
</organism>
<accession>Q58634</accession>
<evidence type="ECO:0000255" key="1">
    <source>
        <dbReference type="HAMAP-Rule" id="MF_02113"/>
    </source>
</evidence>
<evidence type="ECO:0000269" key="2">
    <source>
    </source>
</evidence>
<evidence type="ECO:0000269" key="3">
    <source>
    </source>
</evidence>
<feature type="propeptide" id="PRO_0000026661" description="Removed in mature form; by autocatalysis" evidence="1">
    <location>
        <begin position="1"/>
        <end position="6"/>
    </location>
</feature>
<feature type="chain" id="PRO_0000026662" description="Proteasome subunit beta">
    <location>
        <begin position="7"/>
        <end position="224"/>
    </location>
</feature>
<feature type="active site" description="Nucleophile" evidence="1">
    <location>
        <position position="7"/>
    </location>
</feature>
<comment type="function">
    <text evidence="1 2">Component of the proteasome core, a large protease complex with broad specificity involved in protein degradation. The M.jannaschii proteasome is able to cleave oligopeptides after Glu, Asp, Tyr, Phe, Trp, slightly after Arg, but not after Ala. Thus, displays caspase-like and chymotrypsin-like activities and low level of trypsin-like activity.</text>
</comment>
<comment type="catalytic activity">
    <reaction evidence="1 2">
        <text>Cleavage of peptide bonds with very broad specificity.</text>
        <dbReference type="EC" id="3.4.25.1"/>
    </reaction>
</comment>
<comment type="activity regulation">
    <text evidence="1">The formation of the proteasomal ATPase PAN-20S proteasome complex, via the docking of the C-termini of PAN into the intersubunit pockets in the alpha-rings, triggers opening of the gate for substrate entry. Interconversion between the open-gate and close-gate conformations leads to a dynamic regulation of the 20S proteasome proteolysis activity.</text>
</comment>
<comment type="subunit">
    <text evidence="1 2 3">The 20S proteasome core is composed of 14 alpha and 14 beta subunits that assemble into four stacked heptameric rings, resulting in a barrel-shaped structure. The two inner rings, each composed of seven catalytic beta subunits, are sandwiched by two outer rings, each composed of seven alpha subunits. The catalytic chamber with the active sites is on the inside of the barrel. Has a gated structure, the ends of the cylinder being occluded by the N-termini of the alpha-subunits. Is capped at one or both ends by the proteasome regulatory ATPase, PAN.</text>
</comment>
<comment type="subcellular location">
    <subcellularLocation>
        <location evidence="1">Cytoplasm</location>
    </subcellularLocation>
</comment>
<comment type="similarity">
    <text evidence="1">Belongs to the peptidase T1B family.</text>
</comment>
<name>PSB_METJA</name>
<dbReference type="EC" id="3.4.25.1" evidence="1"/>
<dbReference type="EMBL" id="L77117">
    <property type="protein sequence ID" value="AAB99241.1"/>
    <property type="molecule type" value="Genomic_DNA"/>
</dbReference>
<dbReference type="PIR" id="D64454">
    <property type="entry name" value="D64454"/>
</dbReference>
<dbReference type="RefSeq" id="WP_010870749.1">
    <property type="nucleotide sequence ID" value="NC_000909.1"/>
</dbReference>
<dbReference type="PDB" id="3H4P">
    <property type="method" value="X-ray"/>
    <property type="resolution" value="4.10 A"/>
    <property type="chains" value="a/b/c/d/e/f/g/h/i/j/k/l/m/n=7-224"/>
</dbReference>
<dbReference type="PDBsum" id="3H4P"/>
<dbReference type="SMR" id="Q58634"/>
<dbReference type="FunCoup" id="Q58634">
    <property type="interactions" value="135"/>
</dbReference>
<dbReference type="STRING" id="243232.MJ_1237"/>
<dbReference type="MEROPS" id="T01.002"/>
<dbReference type="PaxDb" id="243232-MJ_1237"/>
<dbReference type="EnsemblBacteria" id="AAB99241">
    <property type="protein sequence ID" value="AAB99241"/>
    <property type="gene ID" value="MJ_1237"/>
</dbReference>
<dbReference type="GeneID" id="1452133"/>
<dbReference type="KEGG" id="mja:MJ_1237"/>
<dbReference type="eggNOG" id="arCOG00970">
    <property type="taxonomic scope" value="Archaea"/>
</dbReference>
<dbReference type="HOGENOM" id="CLU_035750_7_2_2"/>
<dbReference type="InParanoid" id="Q58634"/>
<dbReference type="OrthoDB" id="6330at2157"/>
<dbReference type="PhylomeDB" id="Q58634"/>
<dbReference type="EvolutionaryTrace" id="Q58634"/>
<dbReference type="Proteomes" id="UP000000805">
    <property type="component" value="Chromosome"/>
</dbReference>
<dbReference type="GO" id="GO:0005829">
    <property type="term" value="C:cytosol"/>
    <property type="evidence" value="ECO:0000318"/>
    <property type="project" value="GO_Central"/>
</dbReference>
<dbReference type="GO" id="GO:0019774">
    <property type="term" value="C:proteasome core complex, beta-subunit complex"/>
    <property type="evidence" value="ECO:0000314"/>
    <property type="project" value="UniProtKB"/>
</dbReference>
<dbReference type="GO" id="GO:0004175">
    <property type="term" value="F:endopeptidase activity"/>
    <property type="evidence" value="ECO:0000314"/>
    <property type="project" value="UniProtKB"/>
</dbReference>
<dbReference type="GO" id="GO:0004298">
    <property type="term" value="F:threonine-type endopeptidase activity"/>
    <property type="evidence" value="ECO:0007669"/>
    <property type="project" value="UniProtKB-UniRule"/>
</dbReference>
<dbReference type="GO" id="GO:0010498">
    <property type="term" value="P:proteasomal protein catabolic process"/>
    <property type="evidence" value="ECO:0000314"/>
    <property type="project" value="UniProtKB"/>
</dbReference>
<dbReference type="GO" id="GO:0043161">
    <property type="term" value="P:proteasome-mediated ubiquitin-dependent protein catabolic process"/>
    <property type="evidence" value="ECO:0000318"/>
    <property type="project" value="GO_Central"/>
</dbReference>
<dbReference type="CDD" id="cd03764">
    <property type="entry name" value="proteasome_beta_archeal"/>
    <property type="match status" value="1"/>
</dbReference>
<dbReference type="FunFam" id="3.60.20.10:FF:000049">
    <property type="entry name" value="Proteasome subunit beta"/>
    <property type="match status" value="1"/>
</dbReference>
<dbReference type="Gene3D" id="3.60.20.10">
    <property type="entry name" value="Glutamine Phosphoribosylpyrophosphate, subunit 1, domain 1"/>
    <property type="match status" value="1"/>
</dbReference>
<dbReference type="HAMAP" id="MF_02113_A">
    <property type="entry name" value="Proteasome_B_A"/>
    <property type="match status" value="1"/>
</dbReference>
<dbReference type="InterPro" id="IPR029055">
    <property type="entry name" value="Ntn_hydrolases_N"/>
</dbReference>
<dbReference type="InterPro" id="IPR019983">
    <property type="entry name" value="Pept_T1A_Psome_bsu_arc"/>
</dbReference>
<dbReference type="InterPro" id="IPR000243">
    <property type="entry name" value="Pept_T1A_subB"/>
</dbReference>
<dbReference type="InterPro" id="IPR016050">
    <property type="entry name" value="Proteasome_bsu_CS"/>
</dbReference>
<dbReference type="InterPro" id="IPR001353">
    <property type="entry name" value="Proteasome_sua/b"/>
</dbReference>
<dbReference type="InterPro" id="IPR023333">
    <property type="entry name" value="Proteasome_suB-type"/>
</dbReference>
<dbReference type="NCBIfam" id="TIGR03634">
    <property type="entry name" value="arc_protsome_B"/>
    <property type="match status" value="1"/>
</dbReference>
<dbReference type="PANTHER" id="PTHR32194:SF0">
    <property type="entry name" value="ATP-DEPENDENT PROTEASE SUBUNIT HSLV"/>
    <property type="match status" value="1"/>
</dbReference>
<dbReference type="PANTHER" id="PTHR32194">
    <property type="entry name" value="METALLOPROTEASE TLDD"/>
    <property type="match status" value="1"/>
</dbReference>
<dbReference type="Pfam" id="PF00227">
    <property type="entry name" value="Proteasome"/>
    <property type="match status" value="1"/>
</dbReference>
<dbReference type="PRINTS" id="PR00141">
    <property type="entry name" value="PROTEASOME"/>
</dbReference>
<dbReference type="SUPFAM" id="SSF56235">
    <property type="entry name" value="N-terminal nucleophile aminohydrolases (Ntn hydrolases)"/>
    <property type="match status" value="1"/>
</dbReference>
<dbReference type="PROSITE" id="PS00854">
    <property type="entry name" value="PROTEASOME_BETA_1"/>
    <property type="match status" value="1"/>
</dbReference>
<dbReference type="PROSITE" id="PS51476">
    <property type="entry name" value="PROTEASOME_BETA_2"/>
    <property type="match status" value="1"/>
</dbReference>
<gene>
    <name evidence="1" type="primary">psmB</name>
    <name type="ordered locus">MJ1237</name>
</gene>
<sequence>MDVMKGTTTVGLICDDAVILATDKRASLGNLVADKEAKKLYKIDDYIAMTIAGSVGDAQAIVRLLIAEAKLYKMRTGRNIPPLACATLLSNILHSSRMFPFLTQIIIGGYDLLEGAKLFSLDPLGGMNEEKTFTATGSGSPIAYGVLEAGYDRDMSVEEGIKLALNALKSAMERDTFSGNGISLAVITKDGVKIFEDEEIEKILDSMKAKPKKKTTKRSRRKSK</sequence>
<protein>
    <recommendedName>
        <fullName evidence="1">Proteasome subunit beta</fullName>
        <ecNumber evidence="1">3.4.25.1</ecNumber>
    </recommendedName>
    <alternativeName>
        <fullName evidence="1">20S proteasome beta subunit</fullName>
    </alternativeName>
    <alternativeName>
        <fullName evidence="1">Proteasome core protein PsmB</fullName>
    </alternativeName>
</protein>